<gene>
    <name evidence="1" type="primary">rpsK</name>
    <name type="ordered locus">Aflv_0131</name>
</gene>
<sequence>MARKTNTRKRRVKKNIESGIAHIRSTFNNTIVTITDVHGNAISWSSAGALGFKGSRKSTPFAAQMAAEAAAKASMEHGMKTVEVNVKGPGAGREAAIRALQAAGLEITAIKDVTPVPHNGCRPPKRRRV</sequence>
<protein>
    <recommendedName>
        <fullName evidence="1">Small ribosomal subunit protein uS11</fullName>
    </recommendedName>
    <alternativeName>
        <fullName evidence="2">30S ribosomal protein S11</fullName>
    </alternativeName>
</protein>
<comment type="function">
    <text evidence="1">Located on the platform of the 30S subunit, it bridges several disparate RNA helices of the 16S rRNA. Forms part of the Shine-Dalgarno cleft in the 70S ribosome.</text>
</comment>
<comment type="subunit">
    <text evidence="1">Part of the 30S ribosomal subunit. Interacts with proteins S7 and S18. Binds to IF-3.</text>
</comment>
<comment type="similarity">
    <text evidence="1">Belongs to the universal ribosomal protein uS11 family.</text>
</comment>
<organism>
    <name type="scientific">Anoxybacillus flavithermus (strain DSM 21510 / WK1)</name>
    <dbReference type="NCBI Taxonomy" id="491915"/>
    <lineage>
        <taxon>Bacteria</taxon>
        <taxon>Bacillati</taxon>
        <taxon>Bacillota</taxon>
        <taxon>Bacilli</taxon>
        <taxon>Bacillales</taxon>
        <taxon>Anoxybacillaceae</taxon>
        <taxon>Anoxybacillus</taxon>
    </lineage>
</organism>
<dbReference type="EMBL" id="CP000922">
    <property type="protein sequence ID" value="ACJ32515.1"/>
    <property type="molecule type" value="Genomic_DNA"/>
</dbReference>
<dbReference type="RefSeq" id="WP_003397692.1">
    <property type="nucleotide sequence ID" value="NC_011567.1"/>
</dbReference>
<dbReference type="SMR" id="B7GJ93"/>
<dbReference type="STRING" id="491915.Aflv_0131"/>
<dbReference type="GeneID" id="7036330"/>
<dbReference type="KEGG" id="afl:Aflv_0131"/>
<dbReference type="eggNOG" id="COG0100">
    <property type="taxonomic scope" value="Bacteria"/>
</dbReference>
<dbReference type="HOGENOM" id="CLU_072439_5_0_9"/>
<dbReference type="Proteomes" id="UP000000742">
    <property type="component" value="Chromosome"/>
</dbReference>
<dbReference type="GO" id="GO:1990904">
    <property type="term" value="C:ribonucleoprotein complex"/>
    <property type="evidence" value="ECO:0007669"/>
    <property type="project" value="UniProtKB-KW"/>
</dbReference>
<dbReference type="GO" id="GO:0005840">
    <property type="term" value="C:ribosome"/>
    <property type="evidence" value="ECO:0007669"/>
    <property type="project" value="UniProtKB-KW"/>
</dbReference>
<dbReference type="GO" id="GO:0019843">
    <property type="term" value="F:rRNA binding"/>
    <property type="evidence" value="ECO:0007669"/>
    <property type="project" value="UniProtKB-UniRule"/>
</dbReference>
<dbReference type="GO" id="GO:0003735">
    <property type="term" value="F:structural constituent of ribosome"/>
    <property type="evidence" value="ECO:0007669"/>
    <property type="project" value="InterPro"/>
</dbReference>
<dbReference type="GO" id="GO:0006412">
    <property type="term" value="P:translation"/>
    <property type="evidence" value="ECO:0007669"/>
    <property type="project" value="UniProtKB-UniRule"/>
</dbReference>
<dbReference type="FunFam" id="3.30.420.80:FF:000001">
    <property type="entry name" value="30S ribosomal protein S11"/>
    <property type="match status" value="1"/>
</dbReference>
<dbReference type="Gene3D" id="3.30.420.80">
    <property type="entry name" value="Ribosomal protein S11"/>
    <property type="match status" value="1"/>
</dbReference>
<dbReference type="HAMAP" id="MF_01310">
    <property type="entry name" value="Ribosomal_uS11"/>
    <property type="match status" value="1"/>
</dbReference>
<dbReference type="InterPro" id="IPR001971">
    <property type="entry name" value="Ribosomal_uS11"/>
</dbReference>
<dbReference type="InterPro" id="IPR019981">
    <property type="entry name" value="Ribosomal_uS11_bac-type"/>
</dbReference>
<dbReference type="InterPro" id="IPR018102">
    <property type="entry name" value="Ribosomal_uS11_CS"/>
</dbReference>
<dbReference type="InterPro" id="IPR036967">
    <property type="entry name" value="Ribosomal_uS11_sf"/>
</dbReference>
<dbReference type="NCBIfam" id="NF003698">
    <property type="entry name" value="PRK05309.1"/>
    <property type="match status" value="1"/>
</dbReference>
<dbReference type="NCBIfam" id="TIGR03632">
    <property type="entry name" value="uS11_bact"/>
    <property type="match status" value="1"/>
</dbReference>
<dbReference type="PANTHER" id="PTHR11759">
    <property type="entry name" value="40S RIBOSOMAL PROTEIN S14/30S RIBOSOMAL PROTEIN S11"/>
    <property type="match status" value="1"/>
</dbReference>
<dbReference type="Pfam" id="PF00411">
    <property type="entry name" value="Ribosomal_S11"/>
    <property type="match status" value="1"/>
</dbReference>
<dbReference type="PIRSF" id="PIRSF002131">
    <property type="entry name" value="Ribosomal_S11"/>
    <property type="match status" value="1"/>
</dbReference>
<dbReference type="SUPFAM" id="SSF53137">
    <property type="entry name" value="Translational machinery components"/>
    <property type="match status" value="1"/>
</dbReference>
<dbReference type="PROSITE" id="PS00054">
    <property type="entry name" value="RIBOSOMAL_S11"/>
    <property type="match status" value="1"/>
</dbReference>
<name>RS11_ANOFW</name>
<accession>B7GJ93</accession>
<evidence type="ECO:0000255" key="1">
    <source>
        <dbReference type="HAMAP-Rule" id="MF_01310"/>
    </source>
</evidence>
<evidence type="ECO:0000305" key="2"/>
<reference key="1">
    <citation type="journal article" date="2008" name="Genome Biol.">
        <title>Encapsulated in silica: genome, proteome and physiology of the thermophilic bacterium Anoxybacillus flavithermus WK1.</title>
        <authorList>
            <person name="Saw J.H."/>
            <person name="Mountain B.W."/>
            <person name="Feng L."/>
            <person name="Omelchenko M.V."/>
            <person name="Hou S."/>
            <person name="Saito J.A."/>
            <person name="Stott M.B."/>
            <person name="Li D."/>
            <person name="Zhao G."/>
            <person name="Wu J."/>
            <person name="Galperin M.Y."/>
            <person name="Koonin E.V."/>
            <person name="Makarova K.S."/>
            <person name="Wolf Y.I."/>
            <person name="Rigden D.J."/>
            <person name="Dunfield P.F."/>
            <person name="Wang L."/>
            <person name="Alam M."/>
        </authorList>
    </citation>
    <scope>NUCLEOTIDE SEQUENCE [LARGE SCALE GENOMIC DNA]</scope>
    <source>
        <strain>DSM 21510 / WK1</strain>
    </source>
</reference>
<feature type="chain" id="PRO_1000141049" description="Small ribosomal subunit protein uS11">
    <location>
        <begin position="1"/>
        <end position="129"/>
    </location>
</feature>
<proteinExistence type="inferred from homology"/>
<keyword id="KW-0687">Ribonucleoprotein</keyword>
<keyword id="KW-0689">Ribosomal protein</keyword>
<keyword id="KW-0694">RNA-binding</keyword>
<keyword id="KW-0699">rRNA-binding</keyword>